<gene>
    <name evidence="1" type="primary">ispH</name>
    <name type="synonym">lytB</name>
    <name type="ordered locus">XAC1256</name>
</gene>
<accession>Q8PN17</accession>
<comment type="function">
    <text evidence="1">Catalyzes the conversion of 1-hydroxy-2-methyl-2-(E)-butenyl 4-diphosphate (HMBPP) into a mixture of isopentenyl diphosphate (IPP) and dimethylallyl diphosphate (DMAPP). Acts in the terminal step of the DOXP/MEP pathway for isoprenoid precursor biosynthesis.</text>
</comment>
<comment type="catalytic activity">
    <reaction evidence="1">
        <text>isopentenyl diphosphate + 2 oxidized [2Fe-2S]-[ferredoxin] + H2O = (2E)-4-hydroxy-3-methylbut-2-enyl diphosphate + 2 reduced [2Fe-2S]-[ferredoxin] + 2 H(+)</text>
        <dbReference type="Rhea" id="RHEA:24488"/>
        <dbReference type="Rhea" id="RHEA-COMP:10000"/>
        <dbReference type="Rhea" id="RHEA-COMP:10001"/>
        <dbReference type="ChEBI" id="CHEBI:15377"/>
        <dbReference type="ChEBI" id="CHEBI:15378"/>
        <dbReference type="ChEBI" id="CHEBI:33737"/>
        <dbReference type="ChEBI" id="CHEBI:33738"/>
        <dbReference type="ChEBI" id="CHEBI:128753"/>
        <dbReference type="ChEBI" id="CHEBI:128769"/>
        <dbReference type="EC" id="1.17.7.4"/>
    </reaction>
</comment>
<comment type="catalytic activity">
    <reaction evidence="1">
        <text>dimethylallyl diphosphate + 2 oxidized [2Fe-2S]-[ferredoxin] + H2O = (2E)-4-hydroxy-3-methylbut-2-enyl diphosphate + 2 reduced [2Fe-2S]-[ferredoxin] + 2 H(+)</text>
        <dbReference type="Rhea" id="RHEA:24825"/>
        <dbReference type="Rhea" id="RHEA-COMP:10000"/>
        <dbReference type="Rhea" id="RHEA-COMP:10001"/>
        <dbReference type="ChEBI" id="CHEBI:15377"/>
        <dbReference type="ChEBI" id="CHEBI:15378"/>
        <dbReference type="ChEBI" id="CHEBI:33737"/>
        <dbReference type="ChEBI" id="CHEBI:33738"/>
        <dbReference type="ChEBI" id="CHEBI:57623"/>
        <dbReference type="ChEBI" id="CHEBI:128753"/>
        <dbReference type="EC" id="1.17.7.4"/>
    </reaction>
</comment>
<comment type="cofactor">
    <cofactor evidence="1">
        <name>[4Fe-4S] cluster</name>
        <dbReference type="ChEBI" id="CHEBI:49883"/>
    </cofactor>
    <text evidence="1">Binds 1 [4Fe-4S] cluster per subunit.</text>
</comment>
<comment type="pathway">
    <text evidence="1">Isoprenoid biosynthesis; dimethylallyl diphosphate biosynthesis; dimethylallyl diphosphate from (2E)-4-hydroxy-3-methylbutenyl diphosphate: step 1/1.</text>
</comment>
<comment type="pathway">
    <text evidence="1">Isoprenoid biosynthesis; isopentenyl diphosphate biosynthesis via DXP pathway; isopentenyl diphosphate from 1-deoxy-D-xylulose 5-phosphate: step 6/6.</text>
</comment>
<comment type="similarity">
    <text evidence="1">Belongs to the IspH family.</text>
</comment>
<proteinExistence type="inferred from homology"/>
<feature type="chain" id="PRO_0000128898" description="4-hydroxy-3-methylbut-2-enyl diphosphate reductase">
    <location>
        <begin position="1"/>
        <end position="316"/>
    </location>
</feature>
<feature type="active site" description="Proton donor" evidence="1">
    <location>
        <position position="126"/>
    </location>
</feature>
<feature type="binding site" evidence="1">
    <location>
        <position position="12"/>
    </location>
    <ligand>
        <name>[4Fe-4S] cluster</name>
        <dbReference type="ChEBI" id="CHEBI:49883"/>
    </ligand>
</feature>
<feature type="binding site" evidence="1">
    <location>
        <position position="41"/>
    </location>
    <ligand>
        <name>(2E)-4-hydroxy-3-methylbut-2-enyl diphosphate</name>
        <dbReference type="ChEBI" id="CHEBI:128753"/>
    </ligand>
</feature>
<feature type="binding site" evidence="1">
    <location>
        <position position="41"/>
    </location>
    <ligand>
        <name>dimethylallyl diphosphate</name>
        <dbReference type="ChEBI" id="CHEBI:57623"/>
    </ligand>
</feature>
<feature type="binding site" evidence="1">
    <location>
        <position position="41"/>
    </location>
    <ligand>
        <name>isopentenyl diphosphate</name>
        <dbReference type="ChEBI" id="CHEBI:128769"/>
    </ligand>
</feature>
<feature type="binding site" evidence="1">
    <location>
        <position position="74"/>
    </location>
    <ligand>
        <name>(2E)-4-hydroxy-3-methylbut-2-enyl diphosphate</name>
        <dbReference type="ChEBI" id="CHEBI:128753"/>
    </ligand>
</feature>
<feature type="binding site" evidence="1">
    <location>
        <position position="74"/>
    </location>
    <ligand>
        <name>dimethylallyl diphosphate</name>
        <dbReference type="ChEBI" id="CHEBI:57623"/>
    </ligand>
</feature>
<feature type="binding site" evidence="1">
    <location>
        <position position="74"/>
    </location>
    <ligand>
        <name>isopentenyl diphosphate</name>
        <dbReference type="ChEBI" id="CHEBI:128769"/>
    </ligand>
</feature>
<feature type="binding site" evidence="1">
    <location>
        <position position="96"/>
    </location>
    <ligand>
        <name>[4Fe-4S] cluster</name>
        <dbReference type="ChEBI" id="CHEBI:49883"/>
    </ligand>
</feature>
<feature type="binding site" evidence="1">
    <location>
        <position position="124"/>
    </location>
    <ligand>
        <name>(2E)-4-hydroxy-3-methylbut-2-enyl diphosphate</name>
        <dbReference type="ChEBI" id="CHEBI:128753"/>
    </ligand>
</feature>
<feature type="binding site" evidence="1">
    <location>
        <position position="124"/>
    </location>
    <ligand>
        <name>dimethylallyl diphosphate</name>
        <dbReference type="ChEBI" id="CHEBI:57623"/>
    </ligand>
</feature>
<feature type="binding site" evidence="1">
    <location>
        <position position="124"/>
    </location>
    <ligand>
        <name>isopentenyl diphosphate</name>
        <dbReference type="ChEBI" id="CHEBI:128769"/>
    </ligand>
</feature>
<feature type="binding site" evidence="1">
    <location>
        <position position="169"/>
    </location>
    <ligand>
        <name>(2E)-4-hydroxy-3-methylbut-2-enyl diphosphate</name>
        <dbReference type="ChEBI" id="CHEBI:128753"/>
    </ligand>
</feature>
<feature type="binding site" evidence="1">
    <location>
        <position position="199"/>
    </location>
    <ligand>
        <name>[4Fe-4S] cluster</name>
        <dbReference type="ChEBI" id="CHEBI:49883"/>
    </ligand>
</feature>
<feature type="binding site" evidence="1">
    <location>
        <position position="227"/>
    </location>
    <ligand>
        <name>(2E)-4-hydroxy-3-methylbut-2-enyl diphosphate</name>
        <dbReference type="ChEBI" id="CHEBI:128753"/>
    </ligand>
</feature>
<feature type="binding site" evidence="1">
    <location>
        <position position="227"/>
    </location>
    <ligand>
        <name>dimethylallyl diphosphate</name>
        <dbReference type="ChEBI" id="CHEBI:57623"/>
    </ligand>
</feature>
<feature type="binding site" evidence="1">
    <location>
        <position position="227"/>
    </location>
    <ligand>
        <name>isopentenyl diphosphate</name>
        <dbReference type="ChEBI" id="CHEBI:128769"/>
    </ligand>
</feature>
<feature type="binding site" evidence="1">
    <location>
        <position position="228"/>
    </location>
    <ligand>
        <name>(2E)-4-hydroxy-3-methylbut-2-enyl diphosphate</name>
        <dbReference type="ChEBI" id="CHEBI:128753"/>
    </ligand>
</feature>
<feature type="binding site" evidence="1">
    <location>
        <position position="228"/>
    </location>
    <ligand>
        <name>dimethylallyl diphosphate</name>
        <dbReference type="ChEBI" id="CHEBI:57623"/>
    </ligand>
</feature>
<feature type="binding site" evidence="1">
    <location>
        <position position="228"/>
    </location>
    <ligand>
        <name>isopentenyl diphosphate</name>
        <dbReference type="ChEBI" id="CHEBI:128769"/>
    </ligand>
</feature>
<feature type="binding site" evidence="1">
    <location>
        <position position="229"/>
    </location>
    <ligand>
        <name>(2E)-4-hydroxy-3-methylbut-2-enyl diphosphate</name>
        <dbReference type="ChEBI" id="CHEBI:128753"/>
    </ligand>
</feature>
<feature type="binding site" evidence="1">
    <location>
        <position position="229"/>
    </location>
    <ligand>
        <name>dimethylallyl diphosphate</name>
        <dbReference type="ChEBI" id="CHEBI:57623"/>
    </ligand>
</feature>
<feature type="binding site" evidence="1">
    <location>
        <position position="229"/>
    </location>
    <ligand>
        <name>isopentenyl diphosphate</name>
        <dbReference type="ChEBI" id="CHEBI:128769"/>
    </ligand>
</feature>
<feature type="binding site" evidence="1">
    <location>
        <position position="271"/>
    </location>
    <ligand>
        <name>(2E)-4-hydroxy-3-methylbut-2-enyl diphosphate</name>
        <dbReference type="ChEBI" id="CHEBI:128753"/>
    </ligand>
</feature>
<feature type="binding site" evidence="1">
    <location>
        <position position="271"/>
    </location>
    <ligand>
        <name>dimethylallyl diphosphate</name>
        <dbReference type="ChEBI" id="CHEBI:57623"/>
    </ligand>
</feature>
<feature type="binding site" evidence="1">
    <location>
        <position position="271"/>
    </location>
    <ligand>
        <name>isopentenyl diphosphate</name>
        <dbReference type="ChEBI" id="CHEBI:128769"/>
    </ligand>
</feature>
<keyword id="KW-0004">4Fe-4S</keyword>
<keyword id="KW-0408">Iron</keyword>
<keyword id="KW-0411">Iron-sulfur</keyword>
<keyword id="KW-0414">Isoprene biosynthesis</keyword>
<keyword id="KW-0479">Metal-binding</keyword>
<keyword id="KW-0560">Oxidoreductase</keyword>
<protein>
    <recommendedName>
        <fullName evidence="1">4-hydroxy-3-methylbut-2-enyl diphosphate reductase</fullName>
        <shortName evidence="1">HMBPP reductase</shortName>
        <ecNumber evidence="1">1.17.7.4</ecNumber>
    </recommendedName>
</protein>
<dbReference type="EC" id="1.17.7.4" evidence="1"/>
<dbReference type="EMBL" id="AE008923">
    <property type="protein sequence ID" value="AAM36128.1"/>
    <property type="molecule type" value="Genomic_DNA"/>
</dbReference>
<dbReference type="RefSeq" id="WP_003484303.1">
    <property type="nucleotide sequence ID" value="NC_003919.1"/>
</dbReference>
<dbReference type="SMR" id="Q8PN17"/>
<dbReference type="GeneID" id="66910426"/>
<dbReference type="KEGG" id="xac:XAC1256"/>
<dbReference type="eggNOG" id="COG0761">
    <property type="taxonomic scope" value="Bacteria"/>
</dbReference>
<dbReference type="HOGENOM" id="CLU_027486_1_0_6"/>
<dbReference type="UniPathway" id="UPA00056">
    <property type="reaction ID" value="UER00097"/>
</dbReference>
<dbReference type="UniPathway" id="UPA00059">
    <property type="reaction ID" value="UER00105"/>
</dbReference>
<dbReference type="Proteomes" id="UP000000576">
    <property type="component" value="Chromosome"/>
</dbReference>
<dbReference type="GO" id="GO:0051539">
    <property type="term" value="F:4 iron, 4 sulfur cluster binding"/>
    <property type="evidence" value="ECO:0007669"/>
    <property type="project" value="UniProtKB-UniRule"/>
</dbReference>
<dbReference type="GO" id="GO:0051745">
    <property type="term" value="F:4-hydroxy-3-methylbut-2-enyl diphosphate reductase activity"/>
    <property type="evidence" value="ECO:0007669"/>
    <property type="project" value="UniProtKB-UniRule"/>
</dbReference>
<dbReference type="GO" id="GO:0046872">
    <property type="term" value="F:metal ion binding"/>
    <property type="evidence" value="ECO:0007669"/>
    <property type="project" value="UniProtKB-KW"/>
</dbReference>
<dbReference type="GO" id="GO:0050992">
    <property type="term" value="P:dimethylallyl diphosphate biosynthetic process"/>
    <property type="evidence" value="ECO:0007669"/>
    <property type="project" value="UniProtKB-UniRule"/>
</dbReference>
<dbReference type="GO" id="GO:0019288">
    <property type="term" value="P:isopentenyl diphosphate biosynthetic process, methylerythritol 4-phosphate pathway"/>
    <property type="evidence" value="ECO:0007669"/>
    <property type="project" value="UniProtKB-UniRule"/>
</dbReference>
<dbReference type="GO" id="GO:0016114">
    <property type="term" value="P:terpenoid biosynthetic process"/>
    <property type="evidence" value="ECO:0007669"/>
    <property type="project" value="UniProtKB-UniRule"/>
</dbReference>
<dbReference type="CDD" id="cd13944">
    <property type="entry name" value="lytB_ispH"/>
    <property type="match status" value="1"/>
</dbReference>
<dbReference type="Gene3D" id="3.40.50.11270">
    <property type="match status" value="1"/>
</dbReference>
<dbReference type="Gene3D" id="3.40.1010.20">
    <property type="entry name" value="4-hydroxy-3-methylbut-2-enyl diphosphate reductase, catalytic domain"/>
    <property type="match status" value="2"/>
</dbReference>
<dbReference type="HAMAP" id="MF_00191">
    <property type="entry name" value="IspH"/>
    <property type="match status" value="1"/>
</dbReference>
<dbReference type="InterPro" id="IPR003451">
    <property type="entry name" value="LytB/IspH"/>
</dbReference>
<dbReference type="NCBIfam" id="TIGR00216">
    <property type="entry name" value="ispH_lytB"/>
    <property type="match status" value="1"/>
</dbReference>
<dbReference type="NCBIfam" id="NF002188">
    <property type="entry name" value="PRK01045.1-2"/>
    <property type="match status" value="1"/>
</dbReference>
<dbReference type="NCBIfam" id="NF002190">
    <property type="entry name" value="PRK01045.1-4"/>
    <property type="match status" value="1"/>
</dbReference>
<dbReference type="PANTHER" id="PTHR30426">
    <property type="entry name" value="4-HYDROXY-3-METHYLBUT-2-ENYL DIPHOSPHATE REDUCTASE"/>
    <property type="match status" value="1"/>
</dbReference>
<dbReference type="PANTHER" id="PTHR30426:SF0">
    <property type="entry name" value="4-HYDROXY-3-METHYLBUT-2-ENYL DIPHOSPHATE REDUCTASE"/>
    <property type="match status" value="1"/>
</dbReference>
<dbReference type="Pfam" id="PF02401">
    <property type="entry name" value="LYTB"/>
    <property type="match status" value="1"/>
</dbReference>
<name>ISPH_XANAC</name>
<reference key="1">
    <citation type="journal article" date="2002" name="Nature">
        <title>Comparison of the genomes of two Xanthomonas pathogens with differing host specificities.</title>
        <authorList>
            <person name="da Silva A.C.R."/>
            <person name="Ferro J.A."/>
            <person name="Reinach F.C."/>
            <person name="Farah C.S."/>
            <person name="Furlan L.R."/>
            <person name="Quaggio R.B."/>
            <person name="Monteiro-Vitorello C.B."/>
            <person name="Van Sluys M.A."/>
            <person name="Almeida N.F. Jr."/>
            <person name="Alves L.M.C."/>
            <person name="do Amaral A.M."/>
            <person name="Bertolini M.C."/>
            <person name="Camargo L.E.A."/>
            <person name="Camarotte G."/>
            <person name="Cannavan F."/>
            <person name="Cardozo J."/>
            <person name="Chambergo F."/>
            <person name="Ciapina L.P."/>
            <person name="Cicarelli R.M.B."/>
            <person name="Coutinho L.L."/>
            <person name="Cursino-Santos J.R."/>
            <person name="El-Dorry H."/>
            <person name="Faria J.B."/>
            <person name="Ferreira A.J.S."/>
            <person name="Ferreira R.C.C."/>
            <person name="Ferro M.I.T."/>
            <person name="Formighieri E.F."/>
            <person name="Franco M.C."/>
            <person name="Greggio C.C."/>
            <person name="Gruber A."/>
            <person name="Katsuyama A.M."/>
            <person name="Kishi L.T."/>
            <person name="Leite R.P."/>
            <person name="Lemos E.G.M."/>
            <person name="Lemos M.V.F."/>
            <person name="Locali E.C."/>
            <person name="Machado M.A."/>
            <person name="Madeira A.M.B.N."/>
            <person name="Martinez-Rossi N.M."/>
            <person name="Martins E.C."/>
            <person name="Meidanis J."/>
            <person name="Menck C.F.M."/>
            <person name="Miyaki C.Y."/>
            <person name="Moon D.H."/>
            <person name="Moreira L.M."/>
            <person name="Novo M.T.M."/>
            <person name="Okura V.K."/>
            <person name="Oliveira M.C."/>
            <person name="Oliveira V.R."/>
            <person name="Pereira H.A."/>
            <person name="Rossi A."/>
            <person name="Sena J.A.D."/>
            <person name="Silva C."/>
            <person name="de Souza R.F."/>
            <person name="Spinola L.A.F."/>
            <person name="Takita M.A."/>
            <person name="Tamura R.E."/>
            <person name="Teixeira E.C."/>
            <person name="Tezza R.I.D."/>
            <person name="Trindade dos Santos M."/>
            <person name="Truffi D."/>
            <person name="Tsai S.M."/>
            <person name="White F.F."/>
            <person name="Setubal J.C."/>
            <person name="Kitajima J.P."/>
        </authorList>
    </citation>
    <scope>NUCLEOTIDE SEQUENCE [LARGE SCALE GENOMIC DNA]</scope>
    <source>
        <strain>306</strain>
    </source>
</reference>
<evidence type="ECO:0000255" key="1">
    <source>
        <dbReference type="HAMAP-Rule" id="MF_00191"/>
    </source>
</evidence>
<organism>
    <name type="scientific">Xanthomonas axonopodis pv. citri (strain 306)</name>
    <dbReference type="NCBI Taxonomy" id="190486"/>
    <lineage>
        <taxon>Bacteria</taxon>
        <taxon>Pseudomonadati</taxon>
        <taxon>Pseudomonadota</taxon>
        <taxon>Gammaproteobacteria</taxon>
        <taxon>Lysobacterales</taxon>
        <taxon>Lysobacteraceae</taxon>
        <taxon>Xanthomonas</taxon>
    </lineage>
</organism>
<sequence>MDVLLANPRGFCAGVDRAIEIVKRAIETLGAPIYVRHEVVHNRFVVDDLKQRGAIFVEELDEVPDDATVIFSAHGVSQAVRQEAERRGLKVFDATCPLVTKVHFEVARHCRAGRDVVLIGHAGHPEVEGTMGQWSRERGAGTIYLVEDIEQVATLDVRQPDNLAYTTQTTLSVDDTMGIIEALRARYPAMQGPRHDDICYATQNRQDAVRDLARQCDLVLVVGSPNSSNSNRLSELARRDGVESYLIDNASEIDPAWIVGKQHIGLTAGASAPQVLVDGVLERLRELGAAGVSELEGEPESMVFALPKELRLRLVS</sequence>